<accession>B1AIM9</accession>
<feature type="chain" id="PRO_1000086864" description="Small ribosomal subunit protein uS17">
    <location>
        <begin position="1"/>
        <end position="84"/>
    </location>
</feature>
<comment type="function">
    <text evidence="1">One of the primary rRNA binding proteins, it binds specifically to the 5'-end of 16S ribosomal RNA.</text>
</comment>
<comment type="subunit">
    <text evidence="1">Part of the 30S ribosomal subunit.</text>
</comment>
<comment type="similarity">
    <text evidence="1">Belongs to the universal ribosomal protein uS17 family.</text>
</comment>
<organism>
    <name type="scientific">Ureaplasma parvum serovar 3 (strain ATCC 27815 / 27 / NCTC 11736)</name>
    <dbReference type="NCBI Taxonomy" id="505682"/>
    <lineage>
        <taxon>Bacteria</taxon>
        <taxon>Bacillati</taxon>
        <taxon>Mycoplasmatota</taxon>
        <taxon>Mycoplasmoidales</taxon>
        <taxon>Mycoplasmoidaceae</taxon>
        <taxon>Ureaplasma</taxon>
    </lineage>
</organism>
<reference key="1">
    <citation type="submission" date="2008-02" db="EMBL/GenBank/DDBJ databases">
        <title>Genome sequence of Ureaplasma parvum serovar 3.</title>
        <authorList>
            <person name="Methe B.A."/>
            <person name="Glass J."/>
            <person name="Waites K."/>
            <person name="Shrivastava S."/>
        </authorList>
    </citation>
    <scope>NUCLEOTIDE SEQUENCE [LARGE SCALE GENOMIC DNA]</scope>
    <source>
        <strain>ATCC 27815 / 27 / NCTC 11736</strain>
    </source>
</reference>
<name>RS17_UREP2</name>
<dbReference type="EMBL" id="CP000942">
    <property type="protein sequence ID" value="ACA32824.1"/>
    <property type="molecule type" value="Genomic_DNA"/>
</dbReference>
<dbReference type="RefSeq" id="WP_004025503.1">
    <property type="nucleotide sequence ID" value="NC_010503.1"/>
</dbReference>
<dbReference type="SMR" id="B1AIM9"/>
<dbReference type="GeneID" id="93848715"/>
<dbReference type="KEGG" id="upa:UPA3_0248"/>
<dbReference type="HOGENOM" id="CLU_073626_1_0_14"/>
<dbReference type="Proteomes" id="UP000002162">
    <property type="component" value="Chromosome"/>
</dbReference>
<dbReference type="GO" id="GO:0022627">
    <property type="term" value="C:cytosolic small ribosomal subunit"/>
    <property type="evidence" value="ECO:0007669"/>
    <property type="project" value="TreeGrafter"/>
</dbReference>
<dbReference type="GO" id="GO:0019843">
    <property type="term" value="F:rRNA binding"/>
    <property type="evidence" value="ECO:0007669"/>
    <property type="project" value="UniProtKB-UniRule"/>
</dbReference>
<dbReference type="GO" id="GO:0003735">
    <property type="term" value="F:structural constituent of ribosome"/>
    <property type="evidence" value="ECO:0007669"/>
    <property type="project" value="InterPro"/>
</dbReference>
<dbReference type="GO" id="GO:0006412">
    <property type="term" value="P:translation"/>
    <property type="evidence" value="ECO:0007669"/>
    <property type="project" value="UniProtKB-UniRule"/>
</dbReference>
<dbReference type="CDD" id="cd00364">
    <property type="entry name" value="Ribosomal_uS17"/>
    <property type="match status" value="1"/>
</dbReference>
<dbReference type="Gene3D" id="2.40.50.140">
    <property type="entry name" value="Nucleic acid-binding proteins"/>
    <property type="match status" value="1"/>
</dbReference>
<dbReference type="HAMAP" id="MF_01345_B">
    <property type="entry name" value="Ribosomal_uS17_B"/>
    <property type="match status" value="1"/>
</dbReference>
<dbReference type="InterPro" id="IPR012340">
    <property type="entry name" value="NA-bd_OB-fold"/>
</dbReference>
<dbReference type="InterPro" id="IPR000266">
    <property type="entry name" value="Ribosomal_uS17"/>
</dbReference>
<dbReference type="InterPro" id="IPR019984">
    <property type="entry name" value="Ribosomal_uS17_bact/chlr"/>
</dbReference>
<dbReference type="InterPro" id="IPR019979">
    <property type="entry name" value="Ribosomal_uS17_CS"/>
</dbReference>
<dbReference type="NCBIfam" id="NF004123">
    <property type="entry name" value="PRK05610.1"/>
    <property type="match status" value="1"/>
</dbReference>
<dbReference type="NCBIfam" id="TIGR03635">
    <property type="entry name" value="uS17_bact"/>
    <property type="match status" value="1"/>
</dbReference>
<dbReference type="PANTHER" id="PTHR10744">
    <property type="entry name" value="40S RIBOSOMAL PROTEIN S11 FAMILY MEMBER"/>
    <property type="match status" value="1"/>
</dbReference>
<dbReference type="PANTHER" id="PTHR10744:SF1">
    <property type="entry name" value="SMALL RIBOSOMAL SUBUNIT PROTEIN US17M"/>
    <property type="match status" value="1"/>
</dbReference>
<dbReference type="Pfam" id="PF00366">
    <property type="entry name" value="Ribosomal_S17"/>
    <property type="match status" value="1"/>
</dbReference>
<dbReference type="PRINTS" id="PR00973">
    <property type="entry name" value="RIBOSOMALS17"/>
</dbReference>
<dbReference type="SUPFAM" id="SSF50249">
    <property type="entry name" value="Nucleic acid-binding proteins"/>
    <property type="match status" value="1"/>
</dbReference>
<dbReference type="PROSITE" id="PS00056">
    <property type="entry name" value="RIBOSOMAL_S17"/>
    <property type="match status" value="1"/>
</dbReference>
<gene>
    <name evidence="1" type="primary">rpsQ</name>
    <name type="ordered locus">UPA3_0248</name>
</gene>
<proteinExistence type="inferred from homology"/>
<evidence type="ECO:0000255" key="1">
    <source>
        <dbReference type="HAMAP-Rule" id="MF_01345"/>
    </source>
</evidence>
<evidence type="ECO:0000305" key="2"/>
<protein>
    <recommendedName>
        <fullName evidence="1">Small ribosomal subunit protein uS17</fullName>
    </recommendedName>
    <alternativeName>
        <fullName evidence="2">30S ribosomal protein S17</fullName>
    </alternativeName>
</protein>
<keyword id="KW-0687">Ribonucleoprotein</keyword>
<keyword id="KW-0689">Ribosomal protein</keyword>
<keyword id="KW-0694">RNA-binding</keyword>
<keyword id="KW-0699">rRNA-binding</keyword>
<sequence length="84" mass="9751">MERSRRKVLEGLVVSDKMQKTVVVSVETKSKHPIYRKLVISHKKYHAHNDNDDAKVGDLVEITETRPLSATKNWRVSKILERAR</sequence>